<name>YFJM_BACSU</name>
<gene>
    <name type="primary">yfjM</name>
    <name type="ordered locus">BSU08040</name>
</gene>
<sequence>MKRLCIIPCGKKKIWDVQPDAGPVRAEDAYLSPFHQACERYAKTFFDEWVILSAKHGFLRPDDLVSGNYDVTFGTGHPEIMTADELRRQFHEKGFSDIEELVMLGGKKYRSVLNAVIGEHQHISWPLSSYKGIGYMLQALNRAVEEKHEL</sequence>
<proteinExistence type="predicted"/>
<accession>O31547</accession>
<accession>Q79F11</accession>
<keyword id="KW-1185">Reference proteome</keyword>
<protein>
    <recommendedName>
        <fullName>Uncharacterized protein YfjM</fullName>
    </recommendedName>
</protein>
<organism>
    <name type="scientific">Bacillus subtilis (strain 168)</name>
    <dbReference type="NCBI Taxonomy" id="224308"/>
    <lineage>
        <taxon>Bacteria</taxon>
        <taxon>Bacillati</taxon>
        <taxon>Bacillota</taxon>
        <taxon>Bacilli</taxon>
        <taxon>Bacillales</taxon>
        <taxon>Bacillaceae</taxon>
        <taxon>Bacillus</taxon>
    </lineage>
</organism>
<feature type="chain" id="PRO_0000360565" description="Uncharacterized protein YfjM">
    <location>
        <begin position="1"/>
        <end position="150"/>
    </location>
</feature>
<reference key="1">
    <citation type="journal article" date="1996" name="Microbiology">
        <title>Cloning and sequencing of a 40.6 kb segment in the 73 degrees-76 degrees region of the Bacillus subtilis chromosome containing genes for trehalose metabolism and acetoin utilization.</title>
        <authorList>
            <person name="Yamamoto H."/>
            <person name="Uchiyama S."/>
            <person name="Sekiguchi J."/>
        </authorList>
    </citation>
    <scope>NUCLEOTIDE SEQUENCE [GENOMIC DNA]</scope>
    <source>
        <strain>168 / AC327</strain>
    </source>
</reference>
<reference key="2">
    <citation type="journal article" date="1997" name="Nature">
        <title>The complete genome sequence of the Gram-positive bacterium Bacillus subtilis.</title>
        <authorList>
            <person name="Kunst F."/>
            <person name="Ogasawara N."/>
            <person name="Moszer I."/>
            <person name="Albertini A.M."/>
            <person name="Alloni G."/>
            <person name="Azevedo V."/>
            <person name="Bertero M.G."/>
            <person name="Bessieres P."/>
            <person name="Bolotin A."/>
            <person name="Borchert S."/>
            <person name="Borriss R."/>
            <person name="Boursier L."/>
            <person name="Brans A."/>
            <person name="Braun M."/>
            <person name="Brignell S.C."/>
            <person name="Bron S."/>
            <person name="Brouillet S."/>
            <person name="Bruschi C.V."/>
            <person name="Caldwell B."/>
            <person name="Capuano V."/>
            <person name="Carter N.M."/>
            <person name="Choi S.-K."/>
            <person name="Codani J.-J."/>
            <person name="Connerton I.F."/>
            <person name="Cummings N.J."/>
            <person name="Daniel R.A."/>
            <person name="Denizot F."/>
            <person name="Devine K.M."/>
            <person name="Duesterhoeft A."/>
            <person name="Ehrlich S.D."/>
            <person name="Emmerson P.T."/>
            <person name="Entian K.-D."/>
            <person name="Errington J."/>
            <person name="Fabret C."/>
            <person name="Ferrari E."/>
            <person name="Foulger D."/>
            <person name="Fritz C."/>
            <person name="Fujita M."/>
            <person name="Fujita Y."/>
            <person name="Fuma S."/>
            <person name="Galizzi A."/>
            <person name="Galleron N."/>
            <person name="Ghim S.-Y."/>
            <person name="Glaser P."/>
            <person name="Goffeau A."/>
            <person name="Golightly E.J."/>
            <person name="Grandi G."/>
            <person name="Guiseppi G."/>
            <person name="Guy B.J."/>
            <person name="Haga K."/>
            <person name="Haiech J."/>
            <person name="Harwood C.R."/>
            <person name="Henaut A."/>
            <person name="Hilbert H."/>
            <person name="Holsappel S."/>
            <person name="Hosono S."/>
            <person name="Hullo M.-F."/>
            <person name="Itaya M."/>
            <person name="Jones L.-M."/>
            <person name="Joris B."/>
            <person name="Karamata D."/>
            <person name="Kasahara Y."/>
            <person name="Klaerr-Blanchard M."/>
            <person name="Klein C."/>
            <person name="Kobayashi Y."/>
            <person name="Koetter P."/>
            <person name="Koningstein G."/>
            <person name="Krogh S."/>
            <person name="Kumano M."/>
            <person name="Kurita K."/>
            <person name="Lapidus A."/>
            <person name="Lardinois S."/>
            <person name="Lauber J."/>
            <person name="Lazarevic V."/>
            <person name="Lee S.-M."/>
            <person name="Levine A."/>
            <person name="Liu H."/>
            <person name="Masuda S."/>
            <person name="Mauel C."/>
            <person name="Medigue C."/>
            <person name="Medina N."/>
            <person name="Mellado R.P."/>
            <person name="Mizuno M."/>
            <person name="Moestl D."/>
            <person name="Nakai S."/>
            <person name="Noback M."/>
            <person name="Noone D."/>
            <person name="O'Reilly M."/>
            <person name="Ogawa K."/>
            <person name="Ogiwara A."/>
            <person name="Oudega B."/>
            <person name="Park S.-H."/>
            <person name="Parro V."/>
            <person name="Pohl T.M."/>
            <person name="Portetelle D."/>
            <person name="Porwollik S."/>
            <person name="Prescott A.M."/>
            <person name="Presecan E."/>
            <person name="Pujic P."/>
            <person name="Purnelle B."/>
            <person name="Rapoport G."/>
            <person name="Rey M."/>
            <person name="Reynolds S."/>
            <person name="Rieger M."/>
            <person name="Rivolta C."/>
            <person name="Rocha E."/>
            <person name="Roche B."/>
            <person name="Rose M."/>
            <person name="Sadaie Y."/>
            <person name="Sato T."/>
            <person name="Scanlan E."/>
            <person name="Schleich S."/>
            <person name="Schroeter R."/>
            <person name="Scoffone F."/>
            <person name="Sekiguchi J."/>
            <person name="Sekowska A."/>
            <person name="Seror S.J."/>
            <person name="Serror P."/>
            <person name="Shin B.-S."/>
            <person name="Soldo B."/>
            <person name="Sorokin A."/>
            <person name="Tacconi E."/>
            <person name="Takagi T."/>
            <person name="Takahashi H."/>
            <person name="Takemaru K."/>
            <person name="Takeuchi M."/>
            <person name="Tamakoshi A."/>
            <person name="Tanaka T."/>
            <person name="Terpstra P."/>
            <person name="Tognoni A."/>
            <person name="Tosato V."/>
            <person name="Uchiyama S."/>
            <person name="Vandenbol M."/>
            <person name="Vannier F."/>
            <person name="Vassarotti A."/>
            <person name="Viari A."/>
            <person name="Wambutt R."/>
            <person name="Wedler E."/>
            <person name="Wedler H."/>
            <person name="Weitzenegger T."/>
            <person name="Winters P."/>
            <person name="Wipat A."/>
            <person name="Yamamoto H."/>
            <person name="Yamane K."/>
            <person name="Yasumoto K."/>
            <person name="Yata K."/>
            <person name="Yoshida K."/>
            <person name="Yoshikawa H.-F."/>
            <person name="Zumstein E."/>
            <person name="Yoshikawa H."/>
            <person name="Danchin A."/>
        </authorList>
    </citation>
    <scope>NUCLEOTIDE SEQUENCE [LARGE SCALE GENOMIC DNA]</scope>
    <source>
        <strain>168</strain>
    </source>
</reference>
<dbReference type="EMBL" id="D78509">
    <property type="protein sequence ID" value="BAA24298.1"/>
    <property type="molecule type" value="Genomic_DNA"/>
</dbReference>
<dbReference type="EMBL" id="AL009126">
    <property type="protein sequence ID" value="CAB12633.1"/>
    <property type="molecule type" value="Genomic_DNA"/>
</dbReference>
<dbReference type="PIR" id="D69806">
    <property type="entry name" value="D69806"/>
</dbReference>
<dbReference type="RefSeq" id="NP_388685.1">
    <property type="nucleotide sequence ID" value="NC_000964.3"/>
</dbReference>
<dbReference type="RefSeq" id="WP_003233638.1">
    <property type="nucleotide sequence ID" value="NZ_OZ025638.1"/>
</dbReference>
<dbReference type="SMR" id="O31547"/>
<dbReference type="FunCoup" id="O31547">
    <property type="interactions" value="40"/>
</dbReference>
<dbReference type="STRING" id="224308.BSU08040"/>
<dbReference type="PaxDb" id="224308-BSU08040"/>
<dbReference type="EnsemblBacteria" id="CAB12633">
    <property type="protein sequence ID" value="CAB12633"/>
    <property type="gene ID" value="BSU_08040"/>
</dbReference>
<dbReference type="GeneID" id="939698"/>
<dbReference type="KEGG" id="bsu:BSU08040"/>
<dbReference type="PATRIC" id="fig|224308.179.peg.870"/>
<dbReference type="eggNOG" id="COG4637">
    <property type="taxonomic scope" value="Bacteria"/>
</dbReference>
<dbReference type="InParanoid" id="O31547"/>
<dbReference type="OrthoDB" id="2364857at2"/>
<dbReference type="BioCyc" id="BSUB:BSU08040-MONOMER"/>
<dbReference type="Proteomes" id="UP000001570">
    <property type="component" value="Chromosome"/>
</dbReference>
<dbReference type="InterPro" id="IPR049251">
    <property type="entry name" value="DUF6884"/>
</dbReference>
<dbReference type="Pfam" id="PF21818">
    <property type="entry name" value="DUF6884"/>
    <property type="match status" value="1"/>
</dbReference>